<reference key="1">
    <citation type="journal article" date="2004" name="Proc. Natl. Acad. Sci. U.S.A.">
        <title>Complete genomes of two clinical Staphylococcus aureus strains: evidence for the rapid evolution of virulence and drug resistance.</title>
        <authorList>
            <person name="Holden M.T.G."/>
            <person name="Feil E.J."/>
            <person name="Lindsay J.A."/>
            <person name="Peacock S.J."/>
            <person name="Day N.P.J."/>
            <person name="Enright M.C."/>
            <person name="Foster T.J."/>
            <person name="Moore C.E."/>
            <person name="Hurst L."/>
            <person name="Atkin R."/>
            <person name="Barron A."/>
            <person name="Bason N."/>
            <person name="Bentley S.D."/>
            <person name="Chillingworth C."/>
            <person name="Chillingworth T."/>
            <person name="Churcher C."/>
            <person name="Clark L."/>
            <person name="Corton C."/>
            <person name="Cronin A."/>
            <person name="Doggett J."/>
            <person name="Dowd L."/>
            <person name="Feltwell T."/>
            <person name="Hance Z."/>
            <person name="Harris B."/>
            <person name="Hauser H."/>
            <person name="Holroyd S."/>
            <person name="Jagels K."/>
            <person name="James K.D."/>
            <person name="Lennard N."/>
            <person name="Line A."/>
            <person name="Mayes R."/>
            <person name="Moule S."/>
            <person name="Mungall K."/>
            <person name="Ormond D."/>
            <person name="Quail M.A."/>
            <person name="Rabbinowitsch E."/>
            <person name="Rutherford K.M."/>
            <person name="Sanders M."/>
            <person name="Sharp S."/>
            <person name="Simmonds M."/>
            <person name="Stevens K."/>
            <person name="Whitehead S."/>
            <person name="Barrell B.G."/>
            <person name="Spratt B.G."/>
            <person name="Parkhill J."/>
        </authorList>
    </citation>
    <scope>NUCLEOTIDE SEQUENCE [LARGE SCALE GENOMIC DNA]</scope>
    <source>
        <strain>MRSA252</strain>
    </source>
</reference>
<dbReference type="EC" id="4.2.1.49" evidence="1"/>
<dbReference type="EMBL" id="BX571856">
    <property type="protein sequence ID" value="CAG41397.1"/>
    <property type="molecule type" value="Genomic_DNA"/>
</dbReference>
<dbReference type="RefSeq" id="WP_001226833.1">
    <property type="nucleotide sequence ID" value="NC_002952.2"/>
</dbReference>
<dbReference type="SMR" id="Q6GEA4"/>
<dbReference type="KEGG" id="sar:SAR2417"/>
<dbReference type="HOGENOM" id="CLU_018868_0_1_9"/>
<dbReference type="UniPathway" id="UPA00379">
    <property type="reaction ID" value="UER00550"/>
</dbReference>
<dbReference type="Proteomes" id="UP000000596">
    <property type="component" value="Chromosome"/>
</dbReference>
<dbReference type="GO" id="GO:0005737">
    <property type="term" value="C:cytoplasm"/>
    <property type="evidence" value="ECO:0007669"/>
    <property type="project" value="UniProtKB-SubCell"/>
</dbReference>
<dbReference type="GO" id="GO:0016153">
    <property type="term" value="F:urocanate hydratase activity"/>
    <property type="evidence" value="ECO:0007669"/>
    <property type="project" value="UniProtKB-UniRule"/>
</dbReference>
<dbReference type="GO" id="GO:0019556">
    <property type="term" value="P:L-histidine catabolic process to glutamate and formamide"/>
    <property type="evidence" value="ECO:0007669"/>
    <property type="project" value="UniProtKB-UniPathway"/>
</dbReference>
<dbReference type="GO" id="GO:0019557">
    <property type="term" value="P:L-histidine catabolic process to glutamate and formate"/>
    <property type="evidence" value="ECO:0007669"/>
    <property type="project" value="UniProtKB-UniPathway"/>
</dbReference>
<dbReference type="FunFam" id="3.40.50.10730:FF:000001">
    <property type="entry name" value="Urocanate hydratase"/>
    <property type="match status" value="1"/>
</dbReference>
<dbReference type="Gene3D" id="3.40.50.10730">
    <property type="entry name" value="Urocanase like domains"/>
    <property type="match status" value="1"/>
</dbReference>
<dbReference type="Gene3D" id="3.40.1770.10">
    <property type="entry name" value="Urocanase superfamily"/>
    <property type="match status" value="1"/>
</dbReference>
<dbReference type="HAMAP" id="MF_00577">
    <property type="entry name" value="HutU"/>
    <property type="match status" value="1"/>
</dbReference>
<dbReference type="InterPro" id="IPR055351">
    <property type="entry name" value="Urocanase"/>
</dbReference>
<dbReference type="InterPro" id="IPR023637">
    <property type="entry name" value="Urocanase-like"/>
</dbReference>
<dbReference type="InterPro" id="IPR035401">
    <property type="entry name" value="Urocanase_C"/>
</dbReference>
<dbReference type="InterPro" id="IPR038364">
    <property type="entry name" value="Urocanase_central_sf"/>
</dbReference>
<dbReference type="InterPro" id="IPR023636">
    <property type="entry name" value="Urocanase_CS"/>
</dbReference>
<dbReference type="InterPro" id="IPR035400">
    <property type="entry name" value="Urocanase_N"/>
</dbReference>
<dbReference type="InterPro" id="IPR035085">
    <property type="entry name" value="Urocanase_Rossmann-like"/>
</dbReference>
<dbReference type="InterPro" id="IPR036190">
    <property type="entry name" value="Urocanase_sf"/>
</dbReference>
<dbReference type="NCBIfam" id="TIGR01228">
    <property type="entry name" value="hutU"/>
    <property type="match status" value="1"/>
</dbReference>
<dbReference type="NCBIfam" id="NF003820">
    <property type="entry name" value="PRK05414.1"/>
    <property type="match status" value="1"/>
</dbReference>
<dbReference type="PANTHER" id="PTHR12216">
    <property type="entry name" value="UROCANATE HYDRATASE"/>
    <property type="match status" value="1"/>
</dbReference>
<dbReference type="PANTHER" id="PTHR12216:SF4">
    <property type="entry name" value="UROCANATE HYDRATASE"/>
    <property type="match status" value="1"/>
</dbReference>
<dbReference type="Pfam" id="PF01175">
    <property type="entry name" value="Urocanase"/>
    <property type="match status" value="1"/>
</dbReference>
<dbReference type="Pfam" id="PF17392">
    <property type="entry name" value="Urocanase_C"/>
    <property type="match status" value="1"/>
</dbReference>
<dbReference type="Pfam" id="PF17391">
    <property type="entry name" value="Urocanase_N"/>
    <property type="match status" value="1"/>
</dbReference>
<dbReference type="PIRSF" id="PIRSF001423">
    <property type="entry name" value="Urocanate_hydrat"/>
    <property type="match status" value="1"/>
</dbReference>
<dbReference type="SUPFAM" id="SSF111326">
    <property type="entry name" value="Urocanase"/>
    <property type="match status" value="1"/>
</dbReference>
<dbReference type="PROSITE" id="PS01233">
    <property type="entry name" value="UROCANASE"/>
    <property type="match status" value="1"/>
</dbReference>
<sequence length="553" mass="60643">MRKIQAKKGLSIECKGWEQEAVLRMLYNNLDTEVAERPEDLVVYGGIGKAARNWEAFEAIEKTLRELESDETMLVQSGKPVAVFKTHEEAPRVLISNSVLVPEWANWDHFNELDKKGLIMYGQMTAGSWIYIGSQGIVQGTYETFAELGNQHFNGDLAGTVTLTAGLGGMGGAQPLAITMNHGVAICVDVDETRVDKRIATKYCDIKTANLDEALKLAEEAKERGEGLSIGLVGNAVDLHQAILEKGFKIDIITDQTSAHDPLNGYVPQGYSVEEAKVLREKDPKKYVELSQASMAKHVELMLEFHKRGAVAFDYGNNIRQVAFNNGVRNAFDFPGFVPAYIRPLFCEGKGPFRFAALSGDPKDIERADEEMRKLFPENEKLLRWLDLAEEKISYQGLPSRIAWLGYGERAKMGLALNRLVRDGEISAPIVIGRDHLDAGSVASPNRETESMKDGSDAVGDWAVLNALINTAAGGSWISFHHGGGVGMGYSLHAGMVVVADGSERAERRLERVLTTDPGMGVARHVDAGYDIAIQTAKEKGIHIPMIDKAGDK</sequence>
<comment type="function">
    <text evidence="1">Catalyzes the conversion of urocanate to 4-imidazolone-5-propionate.</text>
</comment>
<comment type="catalytic activity">
    <reaction evidence="1">
        <text>4-imidazolone-5-propanoate = trans-urocanate + H2O</text>
        <dbReference type="Rhea" id="RHEA:13101"/>
        <dbReference type="ChEBI" id="CHEBI:15377"/>
        <dbReference type="ChEBI" id="CHEBI:17771"/>
        <dbReference type="ChEBI" id="CHEBI:77893"/>
        <dbReference type="EC" id="4.2.1.49"/>
    </reaction>
</comment>
<comment type="cofactor">
    <cofactor evidence="1">
        <name>NAD(+)</name>
        <dbReference type="ChEBI" id="CHEBI:57540"/>
    </cofactor>
    <text evidence="1">Binds 1 NAD(+) per subunit.</text>
</comment>
<comment type="pathway">
    <text evidence="1">Amino-acid degradation; L-histidine degradation into L-glutamate; N-formimidoyl-L-glutamate from L-histidine: step 2/3.</text>
</comment>
<comment type="subcellular location">
    <subcellularLocation>
        <location evidence="1">Cytoplasm</location>
    </subcellularLocation>
</comment>
<comment type="similarity">
    <text evidence="1">Belongs to the urocanase family.</text>
</comment>
<accession>Q6GEA4</accession>
<feature type="chain" id="PRO_0000207356" description="Urocanate hydratase">
    <location>
        <begin position="1"/>
        <end position="553"/>
    </location>
</feature>
<feature type="binding site" evidence="1">
    <location>
        <begin position="45"/>
        <end position="46"/>
    </location>
    <ligand>
        <name>NAD(+)</name>
        <dbReference type="ChEBI" id="CHEBI:57540"/>
    </ligand>
</feature>
<feature type="binding site" evidence="1">
    <location>
        <position position="123"/>
    </location>
    <ligand>
        <name>NAD(+)</name>
        <dbReference type="ChEBI" id="CHEBI:57540"/>
    </ligand>
</feature>
<feature type="binding site" evidence="1">
    <location>
        <begin position="169"/>
        <end position="171"/>
    </location>
    <ligand>
        <name>NAD(+)</name>
        <dbReference type="ChEBI" id="CHEBI:57540"/>
    </ligand>
</feature>
<feature type="binding site" evidence="1">
    <location>
        <position position="189"/>
    </location>
    <ligand>
        <name>NAD(+)</name>
        <dbReference type="ChEBI" id="CHEBI:57540"/>
    </ligand>
</feature>
<feature type="binding site" evidence="1">
    <location>
        <position position="194"/>
    </location>
    <ligand>
        <name>NAD(+)</name>
        <dbReference type="ChEBI" id="CHEBI:57540"/>
    </ligand>
</feature>
<feature type="binding site" evidence="1">
    <location>
        <begin position="235"/>
        <end position="236"/>
    </location>
    <ligand>
        <name>NAD(+)</name>
        <dbReference type="ChEBI" id="CHEBI:57540"/>
    </ligand>
</feature>
<feature type="binding site" evidence="1">
    <location>
        <begin position="256"/>
        <end position="260"/>
    </location>
    <ligand>
        <name>NAD(+)</name>
        <dbReference type="ChEBI" id="CHEBI:57540"/>
    </ligand>
</feature>
<feature type="binding site" evidence="1">
    <location>
        <begin position="266"/>
        <end position="267"/>
    </location>
    <ligand>
        <name>NAD(+)</name>
        <dbReference type="ChEBI" id="CHEBI:57540"/>
    </ligand>
</feature>
<feature type="binding site" evidence="1">
    <location>
        <position position="315"/>
    </location>
    <ligand>
        <name>NAD(+)</name>
        <dbReference type="ChEBI" id="CHEBI:57540"/>
    </ligand>
</feature>
<feature type="binding site" evidence="1">
    <location>
        <position position="485"/>
    </location>
    <ligand>
        <name>NAD(+)</name>
        <dbReference type="ChEBI" id="CHEBI:57540"/>
    </ligand>
</feature>
<keyword id="KW-0963">Cytoplasm</keyword>
<keyword id="KW-0369">Histidine metabolism</keyword>
<keyword id="KW-0456">Lyase</keyword>
<keyword id="KW-0520">NAD</keyword>
<organism>
    <name type="scientific">Staphylococcus aureus (strain MRSA252)</name>
    <dbReference type="NCBI Taxonomy" id="282458"/>
    <lineage>
        <taxon>Bacteria</taxon>
        <taxon>Bacillati</taxon>
        <taxon>Bacillota</taxon>
        <taxon>Bacilli</taxon>
        <taxon>Bacillales</taxon>
        <taxon>Staphylococcaceae</taxon>
        <taxon>Staphylococcus</taxon>
    </lineage>
</organism>
<proteinExistence type="inferred from homology"/>
<protein>
    <recommendedName>
        <fullName evidence="1">Urocanate hydratase</fullName>
        <shortName evidence="1">Urocanase</shortName>
        <ecNumber evidence="1">4.2.1.49</ecNumber>
    </recommendedName>
    <alternativeName>
        <fullName evidence="1">Imidazolonepropionate hydrolase</fullName>
    </alternativeName>
</protein>
<gene>
    <name evidence="1" type="primary">hutU</name>
    <name type="ordered locus">SAR2417</name>
</gene>
<evidence type="ECO:0000255" key="1">
    <source>
        <dbReference type="HAMAP-Rule" id="MF_00577"/>
    </source>
</evidence>
<name>HUTU_STAAR</name>